<protein>
    <recommendedName>
        <fullName evidence="1">Ribosomal RNA small subunit methyltransferase A</fullName>
        <ecNumber evidence="1">2.1.1.182</ecNumber>
    </recommendedName>
    <alternativeName>
        <fullName evidence="1">16S rRNA (adenine(1518)-N(6)/adenine(1519)-N(6))-dimethyltransferase</fullName>
    </alternativeName>
    <alternativeName>
        <fullName evidence="1">16S rRNA dimethyladenosine transferase</fullName>
    </alternativeName>
    <alternativeName>
        <fullName evidence="1">16S rRNA dimethylase</fullName>
    </alternativeName>
    <alternativeName>
        <fullName evidence="1">S-adenosylmethionine-6-N', N'-adenosyl(rRNA) dimethyltransferase</fullName>
    </alternativeName>
</protein>
<name>RSMA_ECO5E</name>
<sequence length="273" mass="30454">MNNRVHQGHLARKRFGQNFLNDQFVIDSIVSAINPQKGQAMVEIGPGLAALTEPVGERLDQLTVIELDRDLAARLQTHPFLGPKLTIYQQDAMTFNFGELAEKMGQPLRVFGNLPYNISTPLMFHLFSYTDAIADMHFMLQKEVVNRLVAGPNSKAYGRLSVMAQYYCNVIPVLEVPPSAFTPPPKVDSAVVRLVPHATMPHPVKDVRVLSRITTEAFNQRRKTIRNSLGNLFSVEVLTGMGIDPAMRAENISVAQYCQMANYLAENAPFQES</sequence>
<proteinExistence type="inferred from homology"/>
<organism>
    <name type="scientific">Escherichia coli O157:H7 (strain EC4115 / EHEC)</name>
    <dbReference type="NCBI Taxonomy" id="444450"/>
    <lineage>
        <taxon>Bacteria</taxon>
        <taxon>Pseudomonadati</taxon>
        <taxon>Pseudomonadota</taxon>
        <taxon>Gammaproteobacteria</taxon>
        <taxon>Enterobacterales</taxon>
        <taxon>Enterobacteriaceae</taxon>
        <taxon>Escherichia</taxon>
    </lineage>
</organism>
<reference key="1">
    <citation type="journal article" date="2011" name="Proc. Natl. Acad. Sci. U.S.A.">
        <title>Genomic anatomy of Escherichia coli O157:H7 outbreaks.</title>
        <authorList>
            <person name="Eppinger M."/>
            <person name="Mammel M.K."/>
            <person name="Leclerc J.E."/>
            <person name="Ravel J."/>
            <person name="Cebula T.A."/>
        </authorList>
    </citation>
    <scope>NUCLEOTIDE SEQUENCE [LARGE SCALE GENOMIC DNA]</scope>
    <source>
        <strain>EC4115 / EHEC</strain>
    </source>
</reference>
<dbReference type="EC" id="2.1.1.182" evidence="1"/>
<dbReference type="EMBL" id="CP001164">
    <property type="protein sequence ID" value="ACI36216.1"/>
    <property type="molecule type" value="Genomic_DNA"/>
</dbReference>
<dbReference type="RefSeq" id="WP_001065380.1">
    <property type="nucleotide sequence ID" value="NC_011353.1"/>
</dbReference>
<dbReference type="SMR" id="B5YZ89"/>
<dbReference type="KEGG" id="ecf:ECH74115_0057"/>
<dbReference type="HOGENOM" id="CLU_041220_0_1_6"/>
<dbReference type="GO" id="GO:0005829">
    <property type="term" value="C:cytosol"/>
    <property type="evidence" value="ECO:0007669"/>
    <property type="project" value="TreeGrafter"/>
</dbReference>
<dbReference type="GO" id="GO:0052908">
    <property type="term" value="F:16S rRNA (adenine(1518)-N(6)/adenine(1519)-N(6))-dimethyltransferase activity"/>
    <property type="evidence" value="ECO:0007669"/>
    <property type="project" value="UniProtKB-EC"/>
</dbReference>
<dbReference type="GO" id="GO:0003723">
    <property type="term" value="F:RNA binding"/>
    <property type="evidence" value="ECO:0007669"/>
    <property type="project" value="UniProtKB-KW"/>
</dbReference>
<dbReference type="FunFam" id="1.10.8.100:FF:000001">
    <property type="entry name" value="Ribosomal RNA small subunit methyltransferase A"/>
    <property type="match status" value="1"/>
</dbReference>
<dbReference type="FunFam" id="3.40.50.150:FF:000006">
    <property type="entry name" value="Ribosomal RNA small subunit methyltransferase A"/>
    <property type="match status" value="1"/>
</dbReference>
<dbReference type="Gene3D" id="1.10.8.100">
    <property type="entry name" value="Ribosomal RNA adenine dimethylase-like, domain 2"/>
    <property type="match status" value="1"/>
</dbReference>
<dbReference type="Gene3D" id="3.40.50.150">
    <property type="entry name" value="Vaccinia Virus protein VP39"/>
    <property type="match status" value="1"/>
</dbReference>
<dbReference type="HAMAP" id="MF_00607">
    <property type="entry name" value="16SrRNA_methyltr_A"/>
    <property type="match status" value="1"/>
</dbReference>
<dbReference type="InterPro" id="IPR001737">
    <property type="entry name" value="KsgA/Erm"/>
</dbReference>
<dbReference type="InterPro" id="IPR023165">
    <property type="entry name" value="rRNA_Ade_diMease-like_C"/>
</dbReference>
<dbReference type="InterPro" id="IPR020596">
    <property type="entry name" value="rRNA_Ade_Mease_Trfase_CS"/>
</dbReference>
<dbReference type="InterPro" id="IPR020598">
    <property type="entry name" value="rRNA_Ade_methylase_Trfase_N"/>
</dbReference>
<dbReference type="InterPro" id="IPR011530">
    <property type="entry name" value="rRNA_adenine_dimethylase"/>
</dbReference>
<dbReference type="InterPro" id="IPR029063">
    <property type="entry name" value="SAM-dependent_MTases_sf"/>
</dbReference>
<dbReference type="NCBIfam" id="TIGR00755">
    <property type="entry name" value="ksgA"/>
    <property type="match status" value="1"/>
</dbReference>
<dbReference type="PANTHER" id="PTHR11727">
    <property type="entry name" value="DIMETHYLADENOSINE TRANSFERASE"/>
    <property type="match status" value="1"/>
</dbReference>
<dbReference type="PANTHER" id="PTHR11727:SF7">
    <property type="entry name" value="DIMETHYLADENOSINE TRANSFERASE-RELATED"/>
    <property type="match status" value="1"/>
</dbReference>
<dbReference type="Pfam" id="PF00398">
    <property type="entry name" value="RrnaAD"/>
    <property type="match status" value="1"/>
</dbReference>
<dbReference type="SMART" id="SM00650">
    <property type="entry name" value="rADc"/>
    <property type="match status" value="1"/>
</dbReference>
<dbReference type="SUPFAM" id="SSF53335">
    <property type="entry name" value="S-adenosyl-L-methionine-dependent methyltransferases"/>
    <property type="match status" value="1"/>
</dbReference>
<dbReference type="PROSITE" id="PS01131">
    <property type="entry name" value="RRNA_A_DIMETH"/>
    <property type="match status" value="1"/>
</dbReference>
<dbReference type="PROSITE" id="PS51689">
    <property type="entry name" value="SAM_RNA_A_N6_MT"/>
    <property type="match status" value="1"/>
</dbReference>
<keyword id="KW-0963">Cytoplasm</keyword>
<keyword id="KW-0489">Methyltransferase</keyword>
<keyword id="KW-0694">RNA-binding</keyword>
<keyword id="KW-0698">rRNA processing</keyword>
<keyword id="KW-0949">S-adenosyl-L-methionine</keyword>
<keyword id="KW-0808">Transferase</keyword>
<accession>B5YZ89</accession>
<comment type="function">
    <text evidence="1">Specifically dimethylates two adjacent adenosines (A1518 and A1519) in the loop of a conserved hairpin near the 3'-end of 16S rRNA in the 30S particle. May play a critical role in biogenesis of 30S subunits.</text>
</comment>
<comment type="catalytic activity">
    <reaction evidence="1">
        <text>adenosine(1518)/adenosine(1519) in 16S rRNA + 4 S-adenosyl-L-methionine = N(6)-dimethyladenosine(1518)/N(6)-dimethyladenosine(1519) in 16S rRNA + 4 S-adenosyl-L-homocysteine + 4 H(+)</text>
        <dbReference type="Rhea" id="RHEA:19609"/>
        <dbReference type="Rhea" id="RHEA-COMP:10232"/>
        <dbReference type="Rhea" id="RHEA-COMP:10233"/>
        <dbReference type="ChEBI" id="CHEBI:15378"/>
        <dbReference type="ChEBI" id="CHEBI:57856"/>
        <dbReference type="ChEBI" id="CHEBI:59789"/>
        <dbReference type="ChEBI" id="CHEBI:74411"/>
        <dbReference type="ChEBI" id="CHEBI:74493"/>
        <dbReference type="EC" id="2.1.1.182"/>
    </reaction>
</comment>
<comment type="subcellular location">
    <subcellularLocation>
        <location evidence="1">Cytoplasm</location>
    </subcellularLocation>
</comment>
<comment type="similarity">
    <text evidence="1">Belongs to the class I-like SAM-binding methyltransferase superfamily. rRNA adenine N(6)-methyltransferase family. RsmA subfamily.</text>
</comment>
<gene>
    <name evidence="1" type="primary">rsmA</name>
    <name evidence="1" type="synonym">ksgA</name>
    <name type="ordered locus">ECH74115_0057</name>
</gene>
<feature type="chain" id="PRO_1000130270" description="Ribosomal RNA small subunit methyltransferase A">
    <location>
        <begin position="1"/>
        <end position="273"/>
    </location>
</feature>
<feature type="binding site" evidence="1">
    <location>
        <position position="18"/>
    </location>
    <ligand>
        <name>S-adenosyl-L-methionine</name>
        <dbReference type="ChEBI" id="CHEBI:59789"/>
    </ligand>
</feature>
<feature type="binding site" evidence="1">
    <location>
        <position position="20"/>
    </location>
    <ligand>
        <name>S-adenosyl-L-methionine</name>
        <dbReference type="ChEBI" id="CHEBI:59789"/>
    </ligand>
</feature>
<feature type="binding site" evidence="1">
    <location>
        <position position="45"/>
    </location>
    <ligand>
        <name>S-adenosyl-L-methionine</name>
        <dbReference type="ChEBI" id="CHEBI:59789"/>
    </ligand>
</feature>
<feature type="binding site" evidence="1">
    <location>
        <position position="66"/>
    </location>
    <ligand>
        <name>S-adenosyl-L-methionine</name>
        <dbReference type="ChEBI" id="CHEBI:59789"/>
    </ligand>
</feature>
<feature type="binding site" evidence="1">
    <location>
        <position position="91"/>
    </location>
    <ligand>
        <name>S-adenosyl-L-methionine</name>
        <dbReference type="ChEBI" id="CHEBI:59789"/>
    </ligand>
</feature>
<feature type="binding site" evidence="1">
    <location>
        <position position="113"/>
    </location>
    <ligand>
        <name>S-adenosyl-L-methionine</name>
        <dbReference type="ChEBI" id="CHEBI:59789"/>
    </ligand>
</feature>
<evidence type="ECO:0000255" key="1">
    <source>
        <dbReference type="HAMAP-Rule" id="MF_00607"/>
    </source>
</evidence>